<feature type="signal peptide" evidence="2">
    <location>
        <begin position="1"/>
        <end position="19"/>
    </location>
</feature>
<feature type="chain" id="PRO_0000301965" description="Protein NDNF">
    <location>
        <begin position="20"/>
        <end position="568"/>
    </location>
</feature>
<feature type="domain" description="Fibronectin type-III 1">
    <location>
        <begin position="261"/>
        <end position="331"/>
    </location>
</feature>
<feature type="domain" description="Fibronectin type-III 2">
    <location>
        <begin position="445"/>
        <end position="564"/>
    </location>
</feature>
<feature type="glycosylation site" description="N-linked (GlcNAc...) asparagine" evidence="2">
    <location>
        <position position="322"/>
    </location>
</feature>
<feature type="sequence variant" id="VAR_084037" description="In HH25; loss of protein expression." evidence="5">
    <location>
        <begin position="62"/>
        <end position="568"/>
    </location>
</feature>
<feature type="sequence variant" id="VAR_084038" description="In HH25; no effect on protein abundance; no effect on function in cellular response to fibroblast growth factor stimulus; dbSNP:rs200466645." evidence="5">
    <original>T</original>
    <variation>S</variation>
    <location>
        <position position="201"/>
    </location>
</feature>
<feature type="sequence variant" id="VAR_084039" description="In HH25; no effect on protein abundance; decreased secretion; loss of function in cellular response to fibroblast growth factor stimulus." evidence="5">
    <location>
        <begin position="469"/>
        <end position="568"/>
    </location>
</feature>
<feature type="sequence conflict" description="In Ref. 2; BAF82304." evidence="6" ref="2">
    <original>N</original>
    <variation>S</variation>
    <location>
        <position position="119"/>
    </location>
</feature>
<organism>
    <name type="scientific">Homo sapiens</name>
    <name type="common">Human</name>
    <dbReference type="NCBI Taxonomy" id="9606"/>
    <lineage>
        <taxon>Eukaryota</taxon>
        <taxon>Metazoa</taxon>
        <taxon>Chordata</taxon>
        <taxon>Craniata</taxon>
        <taxon>Vertebrata</taxon>
        <taxon>Euteleostomi</taxon>
        <taxon>Mammalia</taxon>
        <taxon>Eutheria</taxon>
        <taxon>Euarchontoglires</taxon>
        <taxon>Primates</taxon>
        <taxon>Haplorrhini</taxon>
        <taxon>Catarrhini</taxon>
        <taxon>Hominidae</taxon>
        <taxon>Homo</taxon>
    </lineage>
</organism>
<sequence>MVLLHWCLLWLLFPLSSRTQKLPTRDEELFQMQIRDKAFFHDSSVIPDGAEISSYLFRDTPKRYFFVVEEDNTPLSVTVTPCDAPLEWKLSLQELPEDRSGEGSGDLEPLEQQKQQIINEEGTELFSYKGNDVEYFISSSSPSGLYQLDLLSTEKDTHFKVYATTTPESDQPYPELPYDPRVDVTSLGRTTVTLAWKPSPTASLLKQPIQYCVVINKEHNFKSLCAVEAKLSADDAFMMAPKPGLDFSPFDFAHFGFPSDNSGKERSFQAKPSPKLGRHVYSRPKVDIQKICIGNKNIFTVSDLKPDTQYYFDVFVVNINSNMSTAYVGTFARTKEEAKQKTVELKDGKITDVFVKRKGAKFLRFAPVSSHQKVTFFIHSCLDAVQIQVRRDGKLLLSQNVEGIQQFQLRGKPKAKYLVRLKGNKKGASMLKILATTRPTKQSFPSLPEDTRIKAFDKLRTCSSATVAWLGTQERNKFCIYKKEVDDNYNEDQKKREQNQCLGPDIRKKSEKVLCKYFHSQNLQKAVTTETIKGLQPGKSYLLDVYVIGHGGHSVKYQSKVVKTRKFC</sequence>
<accession>Q8TB73</accession>
<accession>A8K0Q0</accession>
<accession>Q6UWE5</accession>
<accession>Q9H5P7</accession>
<keyword id="KW-0225">Disease variant</keyword>
<keyword id="KW-0325">Glycoprotein</keyword>
<keyword id="KW-1016">Hypogonadotropic hypogonadism</keyword>
<keyword id="KW-0956">Kallmann syndrome</keyword>
<keyword id="KW-0524">Neurogenesis</keyword>
<keyword id="KW-1267">Proteomics identification</keyword>
<keyword id="KW-1185">Reference proteome</keyword>
<keyword id="KW-0677">Repeat</keyword>
<keyword id="KW-0964">Secreted</keyword>
<keyword id="KW-0732">Signal</keyword>
<name>NDNF_HUMAN</name>
<dbReference type="EMBL" id="AY358821">
    <property type="protein sequence ID" value="AAQ89180.1"/>
    <property type="molecule type" value="mRNA"/>
</dbReference>
<dbReference type="EMBL" id="AK026844">
    <property type="protein sequence ID" value="BAB15573.1"/>
    <property type="status" value="ALT_SEQ"/>
    <property type="molecule type" value="mRNA"/>
</dbReference>
<dbReference type="EMBL" id="AK289615">
    <property type="protein sequence ID" value="BAF82304.1"/>
    <property type="molecule type" value="mRNA"/>
</dbReference>
<dbReference type="EMBL" id="CH471056">
    <property type="protein sequence ID" value="EAX05266.1"/>
    <property type="molecule type" value="Genomic_DNA"/>
</dbReference>
<dbReference type="EMBL" id="BC019351">
    <property type="protein sequence ID" value="AAH19351.2"/>
    <property type="molecule type" value="mRNA"/>
</dbReference>
<dbReference type="CCDS" id="CCDS3717.2"/>
<dbReference type="RefSeq" id="NP_078850.3">
    <property type="nucleotide sequence ID" value="NM_024574.3"/>
</dbReference>
<dbReference type="RefSeq" id="XP_024309980.1">
    <property type="nucleotide sequence ID" value="XM_024454212.2"/>
</dbReference>
<dbReference type="RefSeq" id="XP_024309981.1">
    <property type="nucleotide sequence ID" value="XM_024454213.2"/>
</dbReference>
<dbReference type="RefSeq" id="XP_054206794.1">
    <property type="nucleotide sequence ID" value="XM_054350819.1"/>
</dbReference>
<dbReference type="RefSeq" id="XP_054206795.1">
    <property type="nucleotide sequence ID" value="XM_054350820.1"/>
</dbReference>
<dbReference type="BioGRID" id="122755">
    <property type="interactions" value="15"/>
</dbReference>
<dbReference type="FunCoup" id="Q8TB73">
    <property type="interactions" value="272"/>
</dbReference>
<dbReference type="IntAct" id="Q8TB73">
    <property type="interactions" value="13"/>
</dbReference>
<dbReference type="STRING" id="9606.ENSP00000369014"/>
<dbReference type="GlyCosmos" id="Q8TB73">
    <property type="glycosylation" value="1 site, No reported glycans"/>
</dbReference>
<dbReference type="GlyGen" id="Q8TB73">
    <property type="glycosylation" value="2 sites"/>
</dbReference>
<dbReference type="iPTMnet" id="Q8TB73"/>
<dbReference type="PhosphoSitePlus" id="Q8TB73"/>
<dbReference type="BioMuta" id="NDNF"/>
<dbReference type="DMDM" id="121949126"/>
<dbReference type="jPOST" id="Q8TB73"/>
<dbReference type="MassIVE" id="Q8TB73"/>
<dbReference type="PaxDb" id="9606-ENSP00000369014"/>
<dbReference type="PeptideAtlas" id="Q8TB73"/>
<dbReference type="ProteomicsDB" id="73973"/>
<dbReference type="TopDownProteomics" id="Q8TB73"/>
<dbReference type="Antibodypedia" id="52933">
    <property type="antibodies" value="89 antibodies from 17 providers"/>
</dbReference>
<dbReference type="DNASU" id="79625"/>
<dbReference type="Ensembl" id="ENST00000379692.9">
    <property type="protein sequence ID" value="ENSP00000369014.4"/>
    <property type="gene ID" value="ENSG00000173376.14"/>
</dbReference>
<dbReference type="GeneID" id="79625"/>
<dbReference type="KEGG" id="hsa:79625"/>
<dbReference type="MANE-Select" id="ENST00000379692.9">
    <property type="protein sequence ID" value="ENSP00000369014.4"/>
    <property type="RefSeq nucleotide sequence ID" value="NM_024574.4"/>
    <property type="RefSeq protein sequence ID" value="NP_078850.3"/>
</dbReference>
<dbReference type="UCSC" id="uc003idq.2">
    <property type="organism name" value="human"/>
</dbReference>
<dbReference type="AGR" id="HGNC:26256"/>
<dbReference type="CTD" id="79625"/>
<dbReference type="DisGeNET" id="79625"/>
<dbReference type="GeneCards" id="NDNF"/>
<dbReference type="HGNC" id="HGNC:26256">
    <property type="gene designation" value="NDNF"/>
</dbReference>
<dbReference type="HPA" id="ENSG00000173376">
    <property type="expression patterns" value="Tissue enhanced (lung, placenta, retina)"/>
</dbReference>
<dbReference type="MalaCards" id="NDNF"/>
<dbReference type="MIM" id="616506">
    <property type="type" value="gene"/>
</dbReference>
<dbReference type="MIM" id="618841">
    <property type="type" value="phenotype"/>
</dbReference>
<dbReference type="neXtProt" id="NX_Q8TB73"/>
<dbReference type="OpenTargets" id="ENSG00000173376"/>
<dbReference type="Orphanet" id="478">
    <property type="disease" value="Kallmann syndrome"/>
</dbReference>
<dbReference type="PharmGKB" id="PA147358639"/>
<dbReference type="VEuPathDB" id="HostDB:ENSG00000173376"/>
<dbReference type="eggNOG" id="KOG4806">
    <property type="taxonomic scope" value="Eukaryota"/>
</dbReference>
<dbReference type="GeneTree" id="ENSGT00390000007586"/>
<dbReference type="HOGENOM" id="CLU_041753_0_0_1"/>
<dbReference type="InParanoid" id="Q8TB73"/>
<dbReference type="OMA" id="YLFRDTS"/>
<dbReference type="OrthoDB" id="9872501at2759"/>
<dbReference type="PAN-GO" id="Q8TB73">
    <property type="GO annotations" value="3 GO annotations based on evolutionary models"/>
</dbReference>
<dbReference type="PhylomeDB" id="Q8TB73"/>
<dbReference type="TreeFam" id="TF313245"/>
<dbReference type="PathwayCommons" id="Q8TB73"/>
<dbReference type="SignaLink" id="Q8TB73"/>
<dbReference type="BioGRID-ORCS" id="79625">
    <property type="hits" value="15 hits in 1145 CRISPR screens"/>
</dbReference>
<dbReference type="CD-CODE" id="91857CE7">
    <property type="entry name" value="Nucleolus"/>
</dbReference>
<dbReference type="ChiTaRS" id="NDNF">
    <property type="organism name" value="human"/>
</dbReference>
<dbReference type="GenomeRNAi" id="79625"/>
<dbReference type="Pharos" id="Q8TB73">
    <property type="development level" value="Tbio"/>
</dbReference>
<dbReference type="PRO" id="PR:Q8TB73"/>
<dbReference type="Proteomes" id="UP000005640">
    <property type="component" value="Chromosome 4"/>
</dbReference>
<dbReference type="RNAct" id="Q8TB73">
    <property type="molecule type" value="protein"/>
</dbReference>
<dbReference type="Bgee" id="ENSG00000173376">
    <property type="expression patterns" value="Expressed in renal glomerulus and 164 other cell types or tissues"/>
</dbReference>
<dbReference type="ExpressionAtlas" id="Q8TB73">
    <property type="expression patterns" value="baseline and differential"/>
</dbReference>
<dbReference type="GO" id="GO:0031012">
    <property type="term" value="C:extracellular matrix"/>
    <property type="evidence" value="ECO:0000250"/>
    <property type="project" value="UniProtKB"/>
</dbReference>
<dbReference type="GO" id="GO:0005576">
    <property type="term" value="C:extracellular region"/>
    <property type="evidence" value="ECO:0000314"/>
    <property type="project" value="UniProtKB"/>
</dbReference>
<dbReference type="GO" id="GO:0005615">
    <property type="term" value="C:extracellular space"/>
    <property type="evidence" value="ECO:0000314"/>
    <property type="project" value="UniProtKB"/>
</dbReference>
<dbReference type="GO" id="GO:0005539">
    <property type="term" value="F:glycosaminoglycan binding"/>
    <property type="evidence" value="ECO:0000250"/>
    <property type="project" value="UniProtKB"/>
</dbReference>
<dbReference type="GO" id="GO:0008201">
    <property type="term" value="F:heparin binding"/>
    <property type="evidence" value="ECO:0000250"/>
    <property type="project" value="UniProtKB"/>
</dbReference>
<dbReference type="GO" id="GO:0001525">
    <property type="term" value="P:angiogenesis"/>
    <property type="evidence" value="ECO:0000314"/>
    <property type="project" value="UniProtKB"/>
</dbReference>
<dbReference type="GO" id="GO:0044344">
    <property type="term" value="P:cellular response to fibroblast growth factor stimulus"/>
    <property type="evidence" value="ECO:0000315"/>
    <property type="project" value="UniProtKB"/>
</dbReference>
<dbReference type="GO" id="GO:0071456">
    <property type="term" value="P:cellular response to hypoxia"/>
    <property type="evidence" value="ECO:0000314"/>
    <property type="project" value="UniProtKB"/>
</dbReference>
<dbReference type="GO" id="GO:0030198">
    <property type="term" value="P:extracellular matrix organization"/>
    <property type="evidence" value="ECO:0000250"/>
    <property type="project" value="UniProtKB"/>
</dbReference>
<dbReference type="GO" id="GO:0021828">
    <property type="term" value="P:gonadotrophin-releasing hormone neuronal migration to the hypothalamus"/>
    <property type="evidence" value="ECO:0000250"/>
    <property type="project" value="UniProtKB"/>
</dbReference>
<dbReference type="GO" id="GO:2000352">
    <property type="term" value="P:negative regulation of endothelial cell apoptotic process"/>
    <property type="evidence" value="ECO:0000314"/>
    <property type="project" value="UniProtKB"/>
</dbReference>
<dbReference type="GO" id="GO:0043524">
    <property type="term" value="P:negative regulation of neuron apoptotic process"/>
    <property type="evidence" value="ECO:0000314"/>
    <property type="project" value="UniProtKB"/>
</dbReference>
<dbReference type="GO" id="GO:0001764">
    <property type="term" value="P:neuron migration"/>
    <property type="evidence" value="ECO:0000314"/>
    <property type="project" value="UniProtKB"/>
</dbReference>
<dbReference type="GO" id="GO:0007263">
    <property type="term" value="P:nitric oxide mediated signal transduction"/>
    <property type="evidence" value="ECO:0000314"/>
    <property type="project" value="UniProtKB"/>
</dbReference>
<dbReference type="GO" id="GO:0010811">
    <property type="term" value="P:positive regulation of cell-substrate adhesion"/>
    <property type="evidence" value="ECO:0000250"/>
    <property type="project" value="UniProtKB"/>
</dbReference>
<dbReference type="GO" id="GO:0010976">
    <property type="term" value="P:positive regulation of neuron projection development"/>
    <property type="evidence" value="ECO:0000314"/>
    <property type="project" value="UniProtKB"/>
</dbReference>
<dbReference type="GO" id="GO:0002931">
    <property type="term" value="P:response to ischemia"/>
    <property type="evidence" value="ECO:0007669"/>
    <property type="project" value="Ensembl"/>
</dbReference>
<dbReference type="GO" id="GO:0061042">
    <property type="term" value="P:vascular wound healing"/>
    <property type="evidence" value="ECO:0000250"/>
    <property type="project" value="UniProtKB"/>
</dbReference>
<dbReference type="Gene3D" id="2.60.40.10">
    <property type="entry name" value="Immunoglobulins"/>
    <property type="match status" value="1"/>
</dbReference>
<dbReference type="InterPro" id="IPR003961">
    <property type="entry name" value="FN3_dom"/>
</dbReference>
<dbReference type="InterPro" id="IPR036116">
    <property type="entry name" value="FN3_sf"/>
</dbReference>
<dbReference type="InterPro" id="IPR013783">
    <property type="entry name" value="Ig-like_fold"/>
</dbReference>
<dbReference type="InterPro" id="IPR019326">
    <property type="entry name" value="NDNF"/>
</dbReference>
<dbReference type="InterPro" id="IPR045805">
    <property type="entry name" value="NDNF_C"/>
</dbReference>
<dbReference type="InterPro" id="IPR055271">
    <property type="entry name" value="NDNF_Fn(III)_1"/>
</dbReference>
<dbReference type="InterPro" id="IPR056225">
    <property type="entry name" value="NDNF_N"/>
</dbReference>
<dbReference type="PANTHER" id="PTHR14619">
    <property type="entry name" value="NEURON-DERIVED NEUROTROPHIC FACTOR"/>
    <property type="match status" value="1"/>
</dbReference>
<dbReference type="PANTHER" id="PTHR14619:SF1">
    <property type="entry name" value="PROTEIN NDNF"/>
    <property type="match status" value="1"/>
</dbReference>
<dbReference type="Pfam" id="PF10179">
    <property type="entry name" value="NDNF"/>
    <property type="match status" value="1"/>
</dbReference>
<dbReference type="Pfam" id="PF19433">
    <property type="entry name" value="NDNF_C"/>
    <property type="match status" value="1"/>
</dbReference>
<dbReference type="Pfam" id="PF24354">
    <property type="entry name" value="NDNF_N"/>
    <property type="match status" value="1"/>
</dbReference>
<dbReference type="SMART" id="SM00060">
    <property type="entry name" value="FN3"/>
    <property type="match status" value="2"/>
</dbReference>
<dbReference type="SUPFAM" id="SSF49265">
    <property type="entry name" value="Fibronectin type III"/>
    <property type="match status" value="1"/>
</dbReference>
<evidence type="ECO:0000250" key="1">
    <source>
        <dbReference type="UniProtKB" id="Q8C119"/>
    </source>
</evidence>
<evidence type="ECO:0000255" key="2"/>
<evidence type="ECO:0000269" key="3">
    <source>
    </source>
</evidence>
<evidence type="ECO:0000269" key="4">
    <source>
    </source>
</evidence>
<evidence type="ECO:0000269" key="5">
    <source>
    </source>
</evidence>
<evidence type="ECO:0000305" key="6"/>
<gene>
    <name type="primary">NDNF</name>
    <name type="synonym">C4orf31</name>
    <name type="ORF">UNQ2748/PRO6487</name>
</gene>
<comment type="function">
    <text evidence="1 3 4 5">Secretory protein that plays a role in various cellular processes (PubMed:20969804, PubMed:24706764, PubMed:31883645). Acts as a chemorepellent acting on gonadotropin-releasing hormone (GnRH) expressing neurons regulating their migration to the hypothalamus (PubMed:31883645). Also promotes neuron migration, growth and survival as well as neurite outgrowth and is involved in the development of the olfactory system (PubMed:20969804, PubMed:31883645). May also act through the regulation of growth factors activity and downstream signaling (PubMed:31883645). Also regulates extracellular matrix assembly and cell adhesiveness (By similarity). Promotes endothelial cell survival, vessel formation and plays an important role in the process of revascularization through NOS3-dependent mechanisms (PubMed:24706764).</text>
</comment>
<comment type="subunit">
    <text evidence="1">Binds heparin and chondroitin sulfate.</text>
</comment>
<comment type="subcellular location">
    <subcellularLocation>
        <location evidence="3 4 5">Secreted</location>
    </subcellularLocation>
</comment>
<comment type="tissue specificity">
    <text evidence="5">Expressed in neurons along the gonadotropin-releasing hormone (GnRH) expressing neurons migratory route.</text>
</comment>
<comment type="induction">
    <text evidence="3">Up-regulated by hypoxia (at protein level).</text>
</comment>
<comment type="PTM">
    <text evidence="1">O-glycosylated; contains heparan sulfate and chondroitin sulfate.</text>
</comment>
<comment type="PTM">
    <text evidence="1">N-glycosylated.</text>
</comment>
<comment type="disease" evidence="5">
    <disease id="DI-05798">
        <name>Hypogonadotropic hypogonadism 25 with anosmia</name>
        <acronym>HH25</acronym>
        <description>A form of hypogonadotropic hypogonadism, a group of disorders characterized by absent or incomplete sexual maturation by the age of 18 years, in conjunction with low levels of circulating gonadotropins and testosterone, and no other abnormalities of the hypothalamic-pituitary axis. In some cases, it is associated with non-reproductive phenotypes, such as anosmia, cleft palate, and sensorineural hearing loss. Anosmia or hyposmia is related to the absence or hypoplasia of the olfactory bulbs and tracts. In the presence of anosmia, idiopathic hypogonadotropic hypogonadism is referred to as Kallmann syndrome, whereas in the presence of a normal sense of smell, it has been termed normosmic idiopathic hypogonadotropic hypogonadism (nIHH). HH25 is an autosomal dominant form with anosmia, characterized by intrafamilial variable expressivity and incomplete penetrance.</description>
        <dbReference type="MIM" id="618841"/>
    </disease>
    <text>The disease is caused by variants affecting the gene represented in this entry.</text>
</comment>
<comment type="sequence caution" evidence="6">
    <conflict type="erroneous initiation">
        <sequence resource="EMBL-CDS" id="BAB15573"/>
    </conflict>
    <text>Truncated N-terminus.</text>
</comment>
<comment type="sequence caution" evidence="6">
    <conflict type="frameshift">
        <sequence resource="EMBL-CDS" id="BAB15573"/>
    </conflict>
</comment>
<reference key="1">
    <citation type="journal article" date="2003" name="Genome Res.">
        <title>The secreted protein discovery initiative (SPDI), a large-scale effort to identify novel human secreted and transmembrane proteins: a bioinformatics assessment.</title>
        <authorList>
            <person name="Clark H.F."/>
            <person name="Gurney A.L."/>
            <person name="Abaya E."/>
            <person name="Baker K."/>
            <person name="Baldwin D.T."/>
            <person name="Brush J."/>
            <person name="Chen J."/>
            <person name="Chow B."/>
            <person name="Chui C."/>
            <person name="Crowley C."/>
            <person name="Currell B."/>
            <person name="Deuel B."/>
            <person name="Dowd P."/>
            <person name="Eaton D."/>
            <person name="Foster J.S."/>
            <person name="Grimaldi C."/>
            <person name="Gu Q."/>
            <person name="Hass P.E."/>
            <person name="Heldens S."/>
            <person name="Huang A."/>
            <person name="Kim H.S."/>
            <person name="Klimowski L."/>
            <person name="Jin Y."/>
            <person name="Johnson S."/>
            <person name="Lee J."/>
            <person name="Lewis L."/>
            <person name="Liao D."/>
            <person name="Mark M.R."/>
            <person name="Robbie E."/>
            <person name="Sanchez C."/>
            <person name="Schoenfeld J."/>
            <person name="Seshagiri S."/>
            <person name="Simmons L."/>
            <person name="Singh J."/>
            <person name="Smith V."/>
            <person name="Stinson J."/>
            <person name="Vagts A."/>
            <person name="Vandlen R.L."/>
            <person name="Watanabe C."/>
            <person name="Wieand D."/>
            <person name="Woods K."/>
            <person name="Xie M.-H."/>
            <person name="Yansura D.G."/>
            <person name="Yi S."/>
            <person name="Yu G."/>
            <person name="Yuan J."/>
            <person name="Zhang M."/>
            <person name="Zhang Z."/>
            <person name="Goddard A.D."/>
            <person name="Wood W.I."/>
            <person name="Godowski P.J."/>
            <person name="Gray A.M."/>
        </authorList>
    </citation>
    <scope>NUCLEOTIDE SEQUENCE [LARGE SCALE MRNA]</scope>
</reference>
<reference key="2">
    <citation type="journal article" date="2004" name="Nat. Genet.">
        <title>Complete sequencing and characterization of 21,243 full-length human cDNAs.</title>
        <authorList>
            <person name="Ota T."/>
            <person name="Suzuki Y."/>
            <person name="Nishikawa T."/>
            <person name="Otsuki T."/>
            <person name="Sugiyama T."/>
            <person name="Irie R."/>
            <person name="Wakamatsu A."/>
            <person name="Hayashi K."/>
            <person name="Sato H."/>
            <person name="Nagai K."/>
            <person name="Kimura K."/>
            <person name="Makita H."/>
            <person name="Sekine M."/>
            <person name="Obayashi M."/>
            <person name="Nishi T."/>
            <person name="Shibahara T."/>
            <person name="Tanaka T."/>
            <person name="Ishii S."/>
            <person name="Yamamoto J."/>
            <person name="Saito K."/>
            <person name="Kawai Y."/>
            <person name="Isono Y."/>
            <person name="Nakamura Y."/>
            <person name="Nagahari K."/>
            <person name="Murakami K."/>
            <person name="Yasuda T."/>
            <person name="Iwayanagi T."/>
            <person name="Wagatsuma M."/>
            <person name="Shiratori A."/>
            <person name="Sudo H."/>
            <person name="Hosoiri T."/>
            <person name="Kaku Y."/>
            <person name="Kodaira H."/>
            <person name="Kondo H."/>
            <person name="Sugawara M."/>
            <person name="Takahashi M."/>
            <person name="Kanda K."/>
            <person name="Yokoi T."/>
            <person name="Furuya T."/>
            <person name="Kikkawa E."/>
            <person name="Omura Y."/>
            <person name="Abe K."/>
            <person name="Kamihara K."/>
            <person name="Katsuta N."/>
            <person name="Sato K."/>
            <person name="Tanikawa M."/>
            <person name="Yamazaki M."/>
            <person name="Ninomiya K."/>
            <person name="Ishibashi T."/>
            <person name="Yamashita H."/>
            <person name="Murakawa K."/>
            <person name="Fujimori K."/>
            <person name="Tanai H."/>
            <person name="Kimata M."/>
            <person name="Watanabe M."/>
            <person name="Hiraoka S."/>
            <person name="Chiba Y."/>
            <person name="Ishida S."/>
            <person name="Ono Y."/>
            <person name="Takiguchi S."/>
            <person name="Watanabe S."/>
            <person name="Yosida M."/>
            <person name="Hotuta T."/>
            <person name="Kusano J."/>
            <person name="Kanehori K."/>
            <person name="Takahashi-Fujii A."/>
            <person name="Hara H."/>
            <person name="Tanase T.-O."/>
            <person name="Nomura Y."/>
            <person name="Togiya S."/>
            <person name="Komai F."/>
            <person name="Hara R."/>
            <person name="Takeuchi K."/>
            <person name="Arita M."/>
            <person name="Imose N."/>
            <person name="Musashino K."/>
            <person name="Yuuki H."/>
            <person name="Oshima A."/>
            <person name="Sasaki N."/>
            <person name="Aotsuka S."/>
            <person name="Yoshikawa Y."/>
            <person name="Matsunawa H."/>
            <person name="Ichihara T."/>
            <person name="Shiohata N."/>
            <person name="Sano S."/>
            <person name="Moriya S."/>
            <person name="Momiyama H."/>
            <person name="Satoh N."/>
            <person name="Takami S."/>
            <person name="Terashima Y."/>
            <person name="Suzuki O."/>
            <person name="Nakagawa S."/>
            <person name="Senoh A."/>
            <person name="Mizoguchi H."/>
            <person name="Goto Y."/>
            <person name="Shimizu F."/>
            <person name="Wakebe H."/>
            <person name="Hishigaki H."/>
            <person name="Watanabe T."/>
            <person name="Sugiyama A."/>
            <person name="Takemoto M."/>
            <person name="Kawakami B."/>
            <person name="Yamazaki M."/>
            <person name="Watanabe K."/>
            <person name="Kumagai A."/>
            <person name="Itakura S."/>
            <person name="Fukuzumi Y."/>
            <person name="Fujimori Y."/>
            <person name="Komiyama M."/>
            <person name="Tashiro H."/>
            <person name="Tanigami A."/>
            <person name="Fujiwara T."/>
            <person name="Ono T."/>
            <person name="Yamada K."/>
            <person name="Fujii Y."/>
            <person name="Ozaki K."/>
            <person name="Hirao M."/>
            <person name="Ohmori Y."/>
            <person name="Kawabata A."/>
            <person name="Hikiji T."/>
            <person name="Kobatake N."/>
            <person name="Inagaki H."/>
            <person name="Ikema Y."/>
            <person name="Okamoto S."/>
            <person name="Okitani R."/>
            <person name="Kawakami T."/>
            <person name="Noguchi S."/>
            <person name="Itoh T."/>
            <person name="Shigeta K."/>
            <person name="Senba T."/>
            <person name="Matsumura K."/>
            <person name="Nakajima Y."/>
            <person name="Mizuno T."/>
            <person name="Morinaga M."/>
            <person name="Sasaki M."/>
            <person name="Togashi T."/>
            <person name="Oyama M."/>
            <person name="Hata H."/>
            <person name="Watanabe M."/>
            <person name="Komatsu T."/>
            <person name="Mizushima-Sugano J."/>
            <person name="Satoh T."/>
            <person name="Shirai Y."/>
            <person name="Takahashi Y."/>
            <person name="Nakagawa K."/>
            <person name="Okumura K."/>
            <person name="Nagase T."/>
            <person name="Nomura N."/>
            <person name="Kikuchi H."/>
            <person name="Masuho Y."/>
            <person name="Yamashita R."/>
            <person name="Nakai K."/>
            <person name="Yada T."/>
            <person name="Nakamura Y."/>
            <person name="Ohara O."/>
            <person name="Isogai T."/>
            <person name="Sugano S."/>
        </authorList>
    </citation>
    <scope>NUCLEOTIDE SEQUENCE [LARGE SCALE MRNA]</scope>
    <source>
        <tissue>Amygdala</tissue>
        <tissue>Lung</tissue>
    </source>
</reference>
<reference key="3">
    <citation type="submission" date="2005-09" db="EMBL/GenBank/DDBJ databases">
        <authorList>
            <person name="Mural R.J."/>
            <person name="Istrail S."/>
            <person name="Sutton G.G."/>
            <person name="Florea L."/>
            <person name="Halpern A.L."/>
            <person name="Mobarry C.M."/>
            <person name="Lippert R."/>
            <person name="Walenz B."/>
            <person name="Shatkay H."/>
            <person name="Dew I."/>
            <person name="Miller J.R."/>
            <person name="Flanigan M.J."/>
            <person name="Edwards N.J."/>
            <person name="Bolanos R."/>
            <person name="Fasulo D."/>
            <person name="Halldorsson B.V."/>
            <person name="Hannenhalli S."/>
            <person name="Turner R."/>
            <person name="Yooseph S."/>
            <person name="Lu F."/>
            <person name="Nusskern D.R."/>
            <person name="Shue B.C."/>
            <person name="Zheng X.H."/>
            <person name="Zhong F."/>
            <person name="Delcher A.L."/>
            <person name="Huson D.H."/>
            <person name="Kravitz S.A."/>
            <person name="Mouchard L."/>
            <person name="Reinert K."/>
            <person name="Remington K.A."/>
            <person name="Clark A.G."/>
            <person name="Waterman M.S."/>
            <person name="Eichler E.E."/>
            <person name="Adams M.D."/>
            <person name="Hunkapiller M.W."/>
            <person name="Myers E.W."/>
            <person name="Venter J.C."/>
        </authorList>
    </citation>
    <scope>NUCLEOTIDE SEQUENCE [LARGE SCALE GENOMIC DNA]</scope>
</reference>
<reference key="4">
    <citation type="journal article" date="2004" name="Genome Res.">
        <title>The status, quality, and expansion of the NIH full-length cDNA project: the Mammalian Gene Collection (MGC).</title>
        <authorList>
            <consortium name="The MGC Project Team"/>
        </authorList>
    </citation>
    <scope>NUCLEOTIDE SEQUENCE [LARGE SCALE MRNA]</scope>
    <source>
        <tissue>Ovary</tissue>
    </source>
</reference>
<reference key="5">
    <citation type="journal article" date="2010" name="BMC Neurosci.">
        <title>Spatio-temporal expression of a novel neuron-derived neurotrophic factor (NDNF) in mouse brains during development.</title>
        <authorList>
            <person name="Kuang X.L."/>
            <person name="Zhao X.M."/>
            <person name="Xu H.F."/>
            <person name="Shi Y.Y."/>
            <person name="Deng J.B."/>
            <person name="Sun G.T."/>
        </authorList>
    </citation>
    <scope>FUNCTION</scope>
    <scope>SUBCELLULAR LOCATION</scope>
</reference>
<reference key="6">
    <citation type="journal article" date="2014" name="J. Biol. Chem.">
        <title>Neuron-derived neurotrophic factor functions as a novel modulator that enhances endothelial cell function and revascularization processes.</title>
        <authorList>
            <person name="Ohashi K."/>
            <person name="Enomoto T."/>
            <person name="Joki Y."/>
            <person name="Shibata R."/>
            <person name="Ogura Y."/>
            <person name="Kataoka Y."/>
            <person name="Shimizu Y."/>
            <person name="Kambara T."/>
            <person name="Uemura Y."/>
            <person name="Yuasa D."/>
            <person name="Matsuo K."/>
            <person name="Hayakawa S."/>
            <person name="Hiramatsu-Ito M."/>
            <person name="Murohara T."/>
            <person name="Ouchi N."/>
        </authorList>
    </citation>
    <scope>SUBCELLULAR LOCATION</scope>
    <scope>INDUCTION</scope>
    <scope>FUNCTION</scope>
</reference>
<reference key="7">
    <citation type="journal article" date="2020" name="Am. J. Hum. Genet.">
        <title>Neuron-derived neurotrophic factor is mutated in congenital hypogonadotropic hypogonadism.</title>
        <authorList>
            <person name="Messina A."/>
            <person name="Pulli K."/>
            <person name="Santini S."/>
            <person name="Acierno J."/>
            <person name="Kaensaekoski J."/>
            <person name="Cassatella D."/>
            <person name="Xu C."/>
            <person name="Casoni F."/>
            <person name="Malone S.A."/>
            <person name="Ternier G."/>
            <person name="Conte D."/>
            <person name="Sidis Y."/>
            <person name="Tommiska J."/>
            <person name="Vaaralahti K."/>
            <person name="Dwyer A."/>
            <person name="Gothilf Y."/>
            <person name="Merlo G.R."/>
            <person name="Santoni F."/>
            <person name="Niederlaender N.J."/>
            <person name="Giacobini P."/>
            <person name="Raivio T."/>
            <person name="Pitteloud N."/>
        </authorList>
    </citation>
    <scope>INVOLVEMENT IN HH25</scope>
    <scope>VARIANTS HH25 62-LYS--CYS-568 DEL; SER-201 AND 469-TRP--CYS-568 DEL</scope>
    <scope>CHARACTERIZATION OF VARIANTS HH25 62-LYS--CYS-568 DEL; SER-201 AND 469-TRP--CYS-568 DEL</scope>
    <scope>FUNCTION</scope>
    <scope>SUBCELLULAR LOCATION</scope>
    <scope>TISSUE SPECIFICITY</scope>
</reference>
<protein>
    <recommendedName>
        <fullName>Protein NDNF</fullName>
    </recommendedName>
    <alternativeName>
        <fullName>Neuron-derived neurotrophic factor</fullName>
    </alternativeName>
</protein>
<proteinExistence type="evidence at protein level"/>